<comment type="catalytic activity">
    <reaction evidence="1">
        <text>thymidine + ATP = dTMP + ADP + H(+)</text>
        <dbReference type="Rhea" id="RHEA:19129"/>
        <dbReference type="ChEBI" id="CHEBI:15378"/>
        <dbReference type="ChEBI" id="CHEBI:17748"/>
        <dbReference type="ChEBI" id="CHEBI:30616"/>
        <dbReference type="ChEBI" id="CHEBI:63528"/>
        <dbReference type="ChEBI" id="CHEBI:456216"/>
        <dbReference type="EC" id="2.7.1.21"/>
    </reaction>
</comment>
<comment type="subunit">
    <text evidence="1">Homotetramer.</text>
</comment>
<comment type="subcellular location">
    <subcellularLocation>
        <location evidence="1">Cytoplasm</location>
    </subcellularLocation>
</comment>
<comment type="similarity">
    <text evidence="1">Belongs to the thymidine kinase family.</text>
</comment>
<proteinExistence type="inferred from homology"/>
<reference key="1">
    <citation type="journal article" date="2005" name="Proc. Natl. Acad. Sci. U.S.A.">
        <title>Whole genome sequence of Staphylococcus saprophyticus reveals the pathogenesis of uncomplicated urinary tract infection.</title>
        <authorList>
            <person name="Kuroda M."/>
            <person name="Yamashita A."/>
            <person name="Hirakawa H."/>
            <person name="Kumano M."/>
            <person name="Morikawa K."/>
            <person name="Higashide M."/>
            <person name="Maruyama A."/>
            <person name="Inose Y."/>
            <person name="Matoba K."/>
            <person name="Toh H."/>
            <person name="Kuhara S."/>
            <person name="Hattori M."/>
            <person name="Ohta T."/>
        </authorList>
    </citation>
    <scope>NUCLEOTIDE SEQUENCE [LARGE SCALE GENOMIC DNA]</scope>
    <source>
        <strain>ATCC 15305 / DSM 20229 / NCIMB 8711 / NCTC 7292 / S-41</strain>
    </source>
</reference>
<protein>
    <recommendedName>
        <fullName evidence="1">Thymidine kinase</fullName>
        <ecNumber evidence="1">2.7.1.21</ecNumber>
    </recommendedName>
</protein>
<evidence type="ECO:0000255" key="1">
    <source>
        <dbReference type="HAMAP-Rule" id="MF_00124"/>
    </source>
</evidence>
<name>KITH_STAS1</name>
<feature type="chain" id="PRO_0000242809" description="Thymidine kinase">
    <location>
        <begin position="1"/>
        <end position="199"/>
    </location>
</feature>
<feature type="active site" description="Proton acceptor" evidence="1">
    <location>
        <position position="89"/>
    </location>
</feature>
<feature type="binding site" evidence="1">
    <location>
        <begin position="15"/>
        <end position="22"/>
    </location>
    <ligand>
        <name>ATP</name>
        <dbReference type="ChEBI" id="CHEBI:30616"/>
    </ligand>
</feature>
<feature type="binding site" evidence="1">
    <location>
        <begin position="88"/>
        <end position="91"/>
    </location>
    <ligand>
        <name>ATP</name>
        <dbReference type="ChEBI" id="CHEBI:30616"/>
    </ligand>
</feature>
<feature type="binding site" evidence="1">
    <location>
        <position position="145"/>
    </location>
    <ligand>
        <name>Zn(2+)</name>
        <dbReference type="ChEBI" id="CHEBI:29105"/>
    </ligand>
</feature>
<feature type="binding site" evidence="1">
    <location>
        <position position="148"/>
    </location>
    <ligand>
        <name>Zn(2+)</name>
        <dbReference type="ChEBI" id="CHEBI:29105"/>
    </ligand>
</feature>
<feature type="binding site" evidence="1">
    <location>
        <position position="183"/>
    </location>
    <ligand>
        <name>Zn(2+)</name>
        <dbReference type="ChEBI" id="CHEBI:29105"/>
    </ligand>
</feature>
<feature type="binding site" evidence="1">
    <location>
        <position position="186"/>
    </location>
    <ligand>
        <name>Zn(2+)</name>
        <dbReference type="ChEBI" id="CHEBI:29105"/>
    </ligand>
</feature>
<accession>Q49Z66</accession>
<sequence>MYETYHSGWIECITGSMFSGKSEELIRRLRRGLYAKQKVVVFKPAIDDRYHKDKIVSHNGNAIEAINISTAAEILKHDLSEVDVIGIDEVQFFENGIVHIAEQLAEKGHRVITAGLDMDFRAQPFEPMPQLMAVSEDVTKLQAVCAVCGASSSRTQRLIDGNPAKIDDPVILVGANESYEPRCRAHHIVAPSNTEKEEM</sequence>
<organism>
    <name type="scientific">Staphylococcus saprophyticus subsp. saprophyticus (strain ATCC 15305 / DSM 20229 / NCIMB 8711 / NCTC 7292 / S-41)</name>
    <dbReference type="NCBI Taxonomy" id="342451"/>
    <lineage>
        <taxon>Bacteria</taxon>
        <taxon>Bacillati</taxon>
        <taxon>Bacillota</taxon>
        <taxon>Bacilli</taxon>
        <taxon>Bacillales</taxon>
        <taxon>Staphylococcaceae</taxon>
        <taxon>Staphylococcus</taxon>
    </lineage>
</organism>
<keyword id="KW-0067">ATP-binding</keyword>
<keyword id="KW-0963">Cytoplasm</keyword>
<keyword id="KW-0237">DNA synthesis</keyword>
<keyword id="KW-0418">Kinase</keyword>
<keyword id="KW-0479">Metal-binding</keyword>
<keyword id="KW-0547">Nucleotide-binding</keyword>
<keyword id="KW-1185">Reference proteome</keyword>
<keyword id="KW-0808">Transferase</keyword>
<keyword id="KW-0862">Zinc</keyword>
<dbReference type="EC" id="2.7.1.21" evidence="1"/>
<dbReference type="EMBL" id="AP008934">
    <property type="protein sequence ID" value="BAE17910.1"/>
    <property type="molecule type" value="Genomic_DNA"/>
</dbReference>
<dbReference type="RefSeq" id="WP_011302669.1">
    <property type="nucleotide sequence ID" value="NZ_MTGA01000032.1"/>
</dbReference>
<dbReference type="SMR" id="Q49Z66"/>
<dbReference type="KEGG" id="ssp:SSP0765"/>
<dbReference type="eggNOG" id="COG1435">
    <property type="taxonomic scope" value="Bacteria"/>
</dbReference>
<dbReference type="HOGENOM" id="CLU_064400_3_0_9"/>
<dbReference type="OrthoDB" id="9781579at2"/>
<dbReference type="Proteomes" id="UP000006371">
    <property type="component" value="Chromosome"/>
</dbReference>
<dbReference type="GO" id="GO:0005829">
    <property type="term" value="C:cytosol"/>
    <property type="evidence" value="ECO:0007669"/>
    <property type="project" value="TreeGrafter"/>
</dbReference>
<dbReference type="GO" id="GO:0005524">
    <property type="term" value="F:ATP binding"/>
    <property type="evidence" value="ECO:0007669"/>
    <property type="project" value="UniProtKB-UniRule"/>
</dbReference>
<dbReference type="GO" id="GO:0004797">
    <property type="term" value="F:thymidine kinase activity"/>
    <property type="evidence" value="ECO:0007669"/>
    <property type="project" value="UniProtKB-UniRule"/>
</dbReference>
<dbReference type="GO" id="GO:0008270">
    <property type="term" value="F:zinc ion binding"/>
    <property type="evidence" value="ECO:0007669"/>
    <property type="project" value="UniProtKB-UniRule"/>
</dbReference>
<dbReference type="GO" id="GO:0071897">
    <property type="term" value="P:DNA biosynthetic process"/>
    <property type="evidence" value="ECO:0007669"/>
    <property type="project" value="UniProtKB-KW"/>
</dbReference>
<dbReference type="GO" id="GO:0046104">
    <property type="term" value="P:thymidine metabolic process"/>
    <property type="evidence" value="ECO:0007669"/>
    <property type="project" value="TreeGrafter"/>
</dbReference>
<dbReference type="FunFam" id="3.30.60.20:FF:000026">
    <property type="entry name" value="Thymidine kinase"/>
    <property type="match status" value="1"/>
</dbReference>
<dbReference type="FunFam" id="3.40.50.300:FF:000384">
    <property type="entry name" value="Thymidine kinase"/>
    <property type="match status" value="1"/>
</dbReference>
<dbReference type="Gene3D" id="3.30.60.20">
    <property type="match status" value="1"/>
</dbReference>
<dbReference type="Gene3D" id="3.40.50.300">
    <property type="entry name" value="P-loop containing nucleotide triphosphate hydrolases"/>
    <property type="match status" value="1"/>
</dbReference>
<dbReference type="HAMAP" id="MF_00124">
    <property type="entry name" value="Thymidine_kinase"/>
    <property type="match status" value="1"/>
</dbReference>
<dbReference type="InterPro" id="IPR027417">
    <property type="entry name" value="P-loop_NTPase"/>
</dbReference>
<dbReference type="InterPro" id="IPR001267">
    <property type="entry name" value="Thymidine_kinase"/>
</dbReference>
<dbReference type="InterPro" id="IPR020633">
    <property type="entry name" value="Thymidine_kinase_CS"/>
</dbReference>
<dbReference type="NCBIfam" id="NF003296">
    <property type="entry name" value="PRK04296.1-1"/>
    <property type="match status" value="1"/>
</dbReference>
<dbReference type="PANTHER" id="PTHR11441">
    <property type="entry name" value="THYMIDINE KINASE"/>
    <property type="match status" value="1"/>
</dbReference>
<dbReference type="PANTHER" id="PTHR11441:SF0">
    <property type="entry name" value="THYMIDINE KINASE, CYTOSOLIC"/>
    <property type="match status" value="1"/>
</dbReference>
<dbReference type="Pfam" id="PF00265">
    <property type="entry name" value="TK"/>
    <property type="match status" value="1"/>
</dbReference>
<dbReference type="PIRSF" id="PIRSF035805">
    <property type="entry name" value="TK_cell"/>
    <property type="match status" value="1"/>
</dbReference>
<dbReference type="SUPFAM" id="SSF57716">
    <property type="entry name" value="Glucocorticoid receptor-like (DNA-binding domain)"/>
    <property type="match status" value="1"/>
</dbReference>
<dbReference type="SUPFAM" id="SSF52540">
    <property type="entry name" value="P-loop containing nucleoside triphosphate hydrolases"/>
    <property type="match status" value="1"/>
</dbReference>
<dbReference type="PROSITE" id="PS00603">
    <property type="entry name" value="TK_CELLULAR_TYPE"/>
    <property type="match status" value="1"/>
</dbReference>
<gene>
    <name evidence="1" type="primary">tdk</name>
    <name type="ordered locus">SSP0765</name>
</gene>